<protein>
    <recommendedName>
        <fullName>Glucan endo-1,3-beta-D-glucosidase 2</fullName>
        <shortName>Endo-1,3-beta-glucanase 2</shortName>
        <ecNumber evidence="4 6">3.2.1.39</ecNumber>
    </recommendedName>
    <alternativeName>
        <fullName>Laminarinase-2</fullName>
    </alternativeName>
</protein>
<evidence type="ECO:0000250" key="1">
    <source>
        <dbReference type="UniProtKB" id="A0A023I7E1"/>
    </source>
</evidence>
<evidence type="ECO:0000255" key="2">
    <source>
        <dbReference type="PROSITE-ProRule" id="PRU01352"/>
    </source>
</evidence>
<evidence type="ECO:0000256" key="3">
    <source>
        <dbReference type="SAM" id="MobiDB-lite"/>
    </source>
</evidence>
<evidence type="ECO:0000269" key="4">
    <source>
    </source>
</evidence>
<evidence type="ECO:0000269" key="5">
    <source>
    </source>
</evidence>
<evidence type="ECO:0000269" key="6">
    <source>
    </source>
</evidence>
<evidence type="ECO:0000303" key="7">
    <source>
    </source>
</evidence>
<evidence type="ECO:0000305" key="8"/>
<evidence type="ECO:0000312" key="9">
    <source>
        <dbReference type="SGD" id="S000004134"/>
    </source>
</evidence>
<name>ENG2_YEAST</name>
<gene>
    <name evidence="9" type="primary">ACF2</name>
    <name evidence="7" type="synonym">ENG2</name>
    <name type="synonym">PCA1</name>
    <name type="ordered locus">YLR144C</name>
    <name type="ORF">L3180</name>
</gene>
<proteinExistence type="evidence at protein level"/>
<accession>Q12168</accession>
<accession>D6VYD8</accession>
<accession>Q07268</accession>
<dbReference type="EC" id="3.2.1.39" evidence="4 6"/>
<dbReference type="EMBL" id="U53879">
    <property type="protein sequence ID" value="AAB82378.1"/>
    <property type="molecule type" value="Genomic_DNA"/>
</dbReference>
<dbReference type="EMBL" id="Z73316">
    <property type="protein sequence ID" value="CAA97716.1"/>
    <property type="molecule type" value="Genomic_DNA"/>
</dbReference>
<dbReference type="EMBL" id="X91258">
    <property type="protein sequence ID" value="CAA62664.1"/>
    <property type="molecule type" value="Genomic_DNA"/>
</dbReference>
<dbReference type="EMBL" id="BK006945">
    <property type="protein sequence ID" value="DAA09454.1"/>
    <property type="molecule type" value="Genomic_DNA"/>
</dbReference>
<dbReference type="PIR" id="S64993">
    <property type="entry name" value="S64993"/>
</dbReference>
<dbReference type="RefSeq" id="NP_013245.1">
    <property type="nucleotide sequence ID" value="NM_001182031.1"/>
</dbReference>
<dbReference type="SMR" id="Q12168"/>
<dbReference type="BioGRID" id="31413">
    <property type="interactions" value="78"/>
</dbReference>
<dbReference type="DIP" id="DIP-2889N"/>
<dbReference type="FunCoup" id="Q12168">
    <property type="interactions" value="311"/>
</dbReference>
<dbReference type="IntAct" id="Q12168">
    <property type="interactions" value="19"/>
</dbReference>
<dbReference type="MINT" id="Q12168"/>
<dbReference type="STRING" id="4932.YLR144C"/>
<dbReference type="CAZy" id="GH81">
    <property type="family name" value="Glycoside Hydrolase Family 81"/>
</dbReference>
<dbReference type="iPTMnet" id="Q12168"/>
<dbReference type="PaxDb" id="4932-YLR144C"/>
<dbReference type="PeptideAtlas" id="Q12168"/>
<dbReference type="EnsemblFungi" id="YLR144C_mRNA">
    <property type="protein sequence ID" value="YLR144C"/>
    <property type="gene ID" value="YLR144C"/>
</dbReference>
<dbReference type="GeneID" id="850836"/>
<dbReference type="KEGG" id="sce:YLR144C"/>
<dbReference type="AGR" id="SGD:S000004134"/>
<dbReference type="SGD" id="S000004134">
    <property type="gene designation" value="ACF2"/>
</dbReference>
<dbReference type="VEuPathDB" id="FungiDB:YLR144C"/>
<dbReference type="eggNOG" id="KOG2254">
    <property type="taxonomic scope" value="Eukaryota"/>
</dbReference>
<dbReference type="GeneTree" id="ENSGT00940000176657"/>
<dbReference type="HOGENOM" id="CLU_005482_2_1_1"/>
<dbReference type="InParanoid" id="Q12168"/>
<dbReference type="OMA" id="YIQMIHA"/>
<dbReference type="OrthoDB" id="4473401at2759"/>
<dbReference type="BioCyc" id="YEAST:G3O-32281-MONOMER"/>
<dbReference type="BioGRID-ORCS" id="850836">
    <property type="hits" value="1 hit in 10 CRISPR screens"/>
</dbReference>
<dbReference type="PRO" id="PR:Q12168"/>
<dbReference type="Proteomes" id="UP000002311">
    <property type="component" value="Chromosome XII"/>
</dbReference>
<dbReference type="RNAct" id="Q12168">
    <property type="molecule type" value="protein"/>
</dbReference>
<dbReference type="GO" id="GO:0009986">
    <property type="term" value="C:cell surface"/>
    <property type="evidence" value="ECO:0000318"/>
    <property type="project" value="GO_Central"/>
</dbReference>
<dbReference type="GO" id="GO:0005737">
    <property type="term" value="C:cytoplasm"/>
    <property type="evidence" value="ECO:0007669"/>
    <property type="project" value="UniProtKB-SubCell"/>
</dbReference>
<dbReference type="GO" id="GO:0052861">
    <property type="term" value="F:endo-1,3(4)-beta-glucanase activity"/>
    <property type="evidence" value="ECO:0007669"/>
    <property type="project" value="UniProtKB-EC"/>
</dbReference>
<dbReference type="GO" id="GO:0042973">
    <property type="term" value="F:glucan endo-1,3-beta-D-glucosidase activity"/>
    <property type="evidence" value="ECO:0000314"/>
    <property type="project" value="SGD"/>
</dbReference>
<dbReference type="GO" id="GO:0030036">
    <property type="term" value="P:actin cytoskeleton organization"/>
    <property type="evidence" value="ECO:0000314"/>
    <property type="project" value="SGD"/>
</dbReference>
<dbReference type="GO" id="GO:0071555">
    <property type="term" value="P:cell wall organization"/>
    <property type="evidence" value="ECO:0007669"/>
    <property type="project" value="UniProtKB-KW"/>
</dbReference>
<dbReference type="GO" id="GO:0000272">
    <property type="term" value="P:polysaccharide catabolic process"/>
    <property type="evidence" value="ECO:0007669"/>
    <property type="project" value="UniProtKB-KW"/>
</dbReference>
<dbReference type="FunFam" id="1.10.287.1170:FF:000001">
    <property type="entry name" value="Endo-1,3-beta-glucanase Engl1"/>
    <property type="match status" value="1"/>
</dbReference>
<dbReference type="FunFam" id="2.70.98.30:FF:000006">
    <property type="entry name" value="Endo-1,3-beta-glucanase Engl1"/>
    <property type="match status" value="1"/>
</dbReference>
<dbReference type="Gene3D" id="1.10.287.1170">
    <property type="entry name" value="glycoside hydrolase family 81 endo-[beta] glucanase"/>
    <property type="match status" value="1"/>
</dbReference>
<dbReference type="Gene3D" id="2.70.98.30">
    <property type="entry name" value="Golgi alpha-mannosidase II, domain 4"/>
    <property type="match status" value="1"/>
</dbReference>
<dbReference type="Gene3D" id="1.20.5.420">
    <property type="entry name" value="Immunoglobulin FC, subunit C"/>
    <property type="match status" value="1"/>
</dbReference>
<dbReference type="InterPro" id="IPR005200">
    <property type="entry name" value="Endo-beta-glucanase"/>
</dbReference>
<dbReference type="InterPro" id="IPR040720">
    <property type="entry name" value="GH81_C"/>
</dbReference>
<dbReference type="InterPro" id="IPR040451">
    <property type="entry name" value="GH81_N"/>
</dbReference>
<dbReference type="PANTHER" id="PTHR31983">
    <property type="entry name" value="ENDO-1,3(4)-BETA-GLUCANASE 1"/>
    <property type="match status" value="1"/>
</dbReference>
<dbReference type="PANTHER" id="PTHR31983:SF0">
    <property type="entry name" value="GLUCAN ENDO-1,3-BETA-D-GLUCOSIDASE 2"/>
    <property type="match status" value="1"/>
</dbReference>
<dbReference type="Pfam" id="PF17652">
    <property type="entry name" value="Glyco_hydro81C"/>
    <property type="match status" value="1"/>
</dbReference>
<dbReference type="Pfam" id="PF03639">
    <property type="entry name" value="Glyco_hydro_81"/>
    <property type="match status" value="1"/>
</dbReference>
<dbReference type="PROSITE" id="PS52008">
    <property type="entry name" value="GH81"/>
    <property type="match status" value="1"/>
</dbReference>
<feature type="chain" id="PRO_0000215819" description="Glucan endo-1,3-beta-D-glucosidase 2">
    <location>
        <begin position="1"/>
        <end position="779"/>
    </location>
</feature>
<feature type="domain" description="GH81" evidence="2">
    <location>
        <begin position="73"/>
        <end position="779"/>
    </location>
</feature>
<feature type="region of interest" description="Disordered" evidence="3">
    <location>
        <begin position="1"/>
        <end position="71"/>
    </location>
</feature>
<feature type="region of interest" description="beta-sandwich subdomain" evidence="2">
    <location>
        <begin position="73"/>
        <end position="309"/>
    </location>
</feature>
<feature type="region of interest" description="alpha/beta subdomain" evidence="2">
    <location>
        <begin position="309"/>
        <end position="400"/>
    </location>
</feature>
<feature type="region of interest" description="Sufficient for catalytic activity" evidence="6">
    <location>
        <begin position="375"/>
        <end position="779"/>
    </location>
</feature>
<feature type="region of interest" description="(alpha/beta)6 barrel subdomain" evidence="2">
    <location>
        <begin position="415"/>
        <end position="779"/>
    </location>
</feature>
<feature type="region of interest" description="May provide specificity for triple-helical beta-glucan" evidence="1">
    <location>
        <begin position="678"/>
        <end position="680"/>
    </location>
</feature>
<feature type="compositionally biased region" description="Polar residues" evidence="3">
    <location>
        <begin position="57"/>
        <end position="71"/>
    </location>
</feature>
<feature type="active site" evidence="2">
    <location>
        <position position="526"/>
    </location>
</feature>
<feature type="active site" evidence="2">
    <location>
        <position position="609"/>
    </location>
</feature>
<feature type="active site" evidence="2">
    <location>
        <position position="613"/>
    </location>
</feature>
<feature type="binding site" evidence="1">
    <location>
        <position position="530"/>
    </location>
    <ligand>
        <name>(1,3-beta-D-glucosyl)n</name>
        <dbReference type="ChEBI" id="CHEBI:37671"/>
    </ligand>
</feature>
<feature type="binding site" evidence="1">
    <location>
        <position position="607"/>
    </location>
    <ligand>
        <name>(1,3-beta-D-glucosyl)n</name>
        <dbReference type="ChEBI" id="CHEBI:37671"/>
    </ligand>
</feature>
<feature type="binding site" evidence="1">
    <location>
        <position position="609"/>
    </location>
    <ligand>
        <name>(1,3-beta-D-glucosyl)n</name>
        <dbReference type="ChEBI" id="CHEBI:37671"/>
    </ligand>
</feature>
<feature type="binding site" evidence="1">
    <location>
        <position position="613"/>
    </location>
    <ligand>
        <name>(1,3-beta-D-glucosyl)n</name>
        <dbReference type="ChEBI" id="CHEBI:37671"/>
    </ligand>
</feature>
<feature type="binding site" evidence="1">
    <location>
        <position position="691"/>
    </location>
    <ligand>
        <name>(1,3-beta-D-glucosyl)n</name>
        <dbReference type="ChEBI" id="CHEBI:37671"/>
    </ligand>
</feature>
<feature type="mutagenesis site" description="Abolishes enzyme activity." evidence="6">
    <original>D</original>
    <variation>A</variation>
    <location>
        <position position="518"/>
    </location>
</feature>
<feature type="mutagenesis site" description="Destabilizes the enzyme." evidence="6">
    <original>D</original>
    <variation>A</variation>
    <location>
        <position position="570"/>
    </location>
</feature>
<feature type="mutagenesis site" description="Abolishes enzyme activity." evidence="6">
    <original>D</original>
    <variation>A</variation>
    <location>
        <position position="588"/>
    </location>
</feature>
<feature type="mutagenesis site" description="Abolishes enzyme activity." evidence="6">
    <original>E</original>
    <variation>A</variation>
    <location>
        <position position="609"/>
    </location>
</feature>
<feature type="mutagenesis site" description="Abolishes enzyme activity." evidence="6">
    <original>E</original>
    <variation>A</variation>
    <location>
        <position position="613"/>
    </location>
</feature>
<organism>
    <name type="scientific">Saccharomyces cerevisiae (strain ATCC 204508 / S288c)</name>
    <name type="common">Baker's yeast</name>
    <dbReference type="NCBI Taxonomy" id="559292"/>
    <lineage>
        <taxon>Eukaryota</taxon>
        <taxon>Fungi</taxon>
        <taxon>Dikarya</taxon>
        <taxon>Ascomycota</taxon>
        <taxon>Saccharomycotina</taxon>
        <taxon>Saccharomycetes</taxon>
        <taxon>Saccharomycetales</taxon>
        <taxon>Saccharomycetaceae</taxon>
        <taxon>Saccharomyces</taxon>
    </lineage>
</organism>
<reference key="1">
    <citation type="journal article" date="1997" name="Nature">
        <title>The nucleotide sequence of Saccharomyces cerevisiae chromosome XII.</title>
        <authorList>
            <person name="Johnston M."/>
            <person name="Hillier L.W."/>
            <person name="Riles L."/>
            <person name="Albermann K."/>
            <person name="Andre B."/>
            <person name="Ansorge W."/>
            <person name="Benes V."/>
            <person name="Brueckner M."/>
            <person name="Delius H."/>
            <person name="Dubois E."/>
            <person name="Duesterhoeft A."/>
            <person name="Entian K.-D."/>
            <person name="Floeth M."/>
            <person name="Goffeau A."/>
            <person name="Hebling U."/>
            <person name="Heumann K."/>
            <person name="Heuss-Neitzel D."/>
            <person name="Hilbert H."/>
            <person name="Hilger F."/>
            <person name="Kleine K."/>
            <person name="Koetter P."/>
            <person name="Louis E.J."/>
            <person name="Messenguy F."/>
            <person name="Mewes H.-W."/>
            <person name="Miosga T."/>
            <person name="Moestl D."/>
            <person name="Mueller-Auer S."/>
            <person name="Nentwich U."/>
            <person name="Obermaier B."/>
            <person name="Piravandi E."/>
            <person name="Pohl T.M."/>
            <person name="Portetelle D."/>
            <person name="Purnelle B."/>
            <person name="Rechmann S."/>
            <person name="Rieger M."/>
            <person name="Rinke M."/>
            <person name="Rose M."/>
            <person name="Scharfe M."/>
            <person name="Scherens B."/>
            <person name="Scholler P."/>
            <person name="Schwager C."/>
            <person name="Schwarz S."/>
            <person name="Underwood A.P."/>
            <person name="Urrestarazu L.A."/>
            <person name="Vandenbol M."/>
            <person name="Verhasselt P."/>
            <person name="Vierendeels F."/>
            <person name="Voet M."/>
            <person name="Volckaert G."/>
            <person name="Voss H."/>
            <person name="Wambutt R."/>
            <person name="Wedler E."/>
            <person name="Wedler H."/>
            <person name="Zimmermann F.K."/>
            <person name="Zollner A."/>
            <person name="Hani J."/>
            <person name="Hoheisel J.D."/>
        </authorList>
    </citation>
    <scope>NUCLEOTIDE SEQUENCE [LARGE SCALE GENOMIC DNA]</scope>
    <source>
        <strain>ATCC 204508 / S288c</strain>
    </source>
</reference>
<reference key="2">
    <citation type="journal article" date="2014" name="G3 (Bethesda)">
        <title>The reference genome sequence of Saccharomyces cerevisiae: Then and now.</title>
        <authorList>
            <person name="Engel S.R."/>
            <person name="Dietrich F.S."/>
            <person name="Fisk D.G."/>
            <person name="Binkley G."/>
            <person name="Balakrishnan R."/>
            <person name="Costanzo M.C."/>
            <person name="Dwight S.S."/>
            <person name="Hitz B.C."/>
            <person name="Karra K."/>
            <person name="Nash R.S."/>
            <person name="Weng S."/>
            <person name="Wong E.D."/>
            <person name="Lloyd P."/>
            <person name="Skrzypek M.S."/>
            <person name="Miyasato S.R."/>
            <person name="Simison M."/>
            <person name="Cherry J.M."/>
        </authorList>
    </citation>
    <scope>GENOME REANNOTATION</scope>
    <source>
        <strain>ATCC 204508 / S288c</strain>
    </source>
</reference>
<reference key="3">
    <citation type="submission" date="1995-06" db="EMBL/GenBank/DDBJ databases">
        <title>36.8 kb of S.cerevisiae chromosome XII including ACE2, CKI1, PDC5, SLS1, PUT1 and tRNA-Asp.</title>
        <authorList>
            <person name="Delius H."/>
        </authorList>
    </citation>
    <scope>NUCLEOTIDE SEQUENCE [GENOMIC DNA] OF 680-779</scope>
    <source>
        <strain>ATCC 204508 / S288c</strain>
    </source>
</reference>
<reference key="4">
    <citation type="journal article" date="2002" name="Eukaryot. Cell">
        <title>Eng1p, an endo-1,3-beta-glucanase localized at the daughter side of the septum, is involved in cell separation in Saccharomyces cerevisiae.</title>
        <authorList>
            <person name="Baladron V."/>
            <person name="Ufano S."/>
            <person name="Duenas E."/>
            <person name="Martin-Cuadrado A.B."/>
            <person name="del Rey F."/>
            <person name="Vazquez de Aldana C.R."/>
        </authorList>
    </citation>
    <scope>FUNCTION</scope>
    <scope>CATALYTIC ACTIVITY</scope>
    <scope>SUBCELLULAR LOCATION</scope>
</reference>
<reference key="5">
    <citation type="journal article" date="2003" name="Nature">
        <title>Global analysis of protein expression in yeast.</title>
        <authorList>
            <person name="Ghaemmaghami S."/>
            <person name="Huh W.-K."/>
            <person name="Bower K."/>
            <person name="Howson R.W."/>
            <person name="Belle A."/>
            <person name="Dephoure N."/>
            <person name="O'Shea E.K."/>
            <person name="Weissman J.S."/>
        </authorList>
    </citation>
    <scope>LEVEL OF PROTEIN EXPRESSION [LARGE SCALE ANALYSIS]</scope>
</reference>
<reference key="6">
    <citation type="journal article" date="2008" name="Fungal Genet. Biol.">
        <title>Characterization of the endo-beta-1,3-glucanase activity of S. cerevisiae Eng2 and other members of the GH81 family.</title>
        <authorList>
            <person name="Martin-Cuadrado A.B."/>
            <person name="Fontaine T."/>
            <person name="Esteban P.F."/>
            <person name="del Dedo J.E."/>
            <person name="de Medina-Redondo M."/>
            <person name="del Rey F."/>
            <person name="Latge J.P."/>
            <person name="de Aldana C.R."/>
        </authorList>
    </citation>
    <scope>FUNCTION</scope>
    <scope>CATALYTIC ACTIVITY</scope>
    <scope>ACTIVITY REGULATION</scope>
    <scope>BIOPHYSICOCHEMICAL PROPERTIES</scope>
    <scope>MUTAGENESIS OF ASP-518; ASP-570; ASP-588; GLU-609 AND GLU-613</scope>
</reference>
<sequence>MCYSRQAIPPPVPNRPGGTTNRGPPPLPPRANVQPPVCSSENSSKPRENRVAGESLRTPSSSNPLADSQVNSDNIFQSPVLSNLKAPPSVFNKVQHPVPKPNIDDQSVDPLETNKFYTNMLLDDNTQPIWTHPYSIWFSRDPELFGLAANHTLASQRVFDTTTNPPRFYFNPTNIKSFVFKAREFVSSNDIKLEFRDMKHMSMCLLMSLSSSQFIEFPLVQGMGFVTAIYHDLGFELRSAVGFRSLERISVNERYGKYNIQLENNRNWILYLTSPDYSFPQDFQISLLDSNTIISSHKINGLICQLSADSVPSIDMAAGCYPVYCDLSGQTVDEHFTNYRFNYTVAGYSQSGTTLMYALPHHKAAFTPEMQEREIASSLDSTVKGLMTGYLTNSFDMQVQVPQELGFEPVALSLNKKADYSQEKLSKIREAAVQEVQLSDPQQESNIDSMYFSGKILAKYAWILYVTHYILHDENLTKELLSKLTIAMERFISNQQVLPLNYDVSWKGIISSGSSSQDFGNSYYNDHHFHYSYHVITAAIISLVDSDLSGVTNNSWLENNRDWVECLIRDYSGVDNDDPYFPQFRSFDWFNGHSWAKGLFPSGDGKDEESTSEDVNSCYAIKLWGLVTGNSKLTDIANLQLGIMRNVFQSYFLYESNNTVQPKEFIGNKVSGILFENKIDHATYFGMEPQYIHMIHAIPITSASSWVRTPNFVKEEWEEKMQPIIDQVNDGWKGIIMLNMALLDPKFSYDFFSQPDFNRNFLDNGQSLTWSLAYSGAFS</sequence>
<comment type="function">
    <text evidence="4 6">Cleaves internal linkages in 1,3-beta-glucan.</text>
</comment>
<comment type="catalytic activity">
    <reaction evidence="4 6">
        <text>Hydrolysis of (1-&gt;3)-beta-D-glucosidic linkages in (1-&gt;3)-beta-D-glucans.</text>
        <dbReference type="EC" id="3.2.1.39"/>
    </reaction>
</comment>
<comment type="activity regulation">
    <text evidence="6">Inhibited by mercury ions.</text>
</comment>
<comment type="biophysicochemical properties">
    <phDependence>
        <text evidence="6">Optimum pH is 6.5.</text>
    </phDependence>
    <temperatureDependence>
        <text evidence="6">Optimum temperature is 55 degrees Celsius.</text>
    </temperatureDependence>
</comment>
<comment type="interaction">
    <interactant intactId="EBI-32973">
        <id>Q12168</id>
    </interactant>
    <interactant intactId="EBI-1382">
        <id>P38753</id>
        <label>HSE1</label>
    </interactant>
    <organismsDiffer>false</organismsDiffer>
    <experiments>2</experiments>
</comment>
<comment type="interaction">
    <interactant intactId="EBI-32973">
        <id>Q12168</id>
    </interactant>
    <interactant intactId="EBI-23329">
        <id>P53281</id>
        <label>LSB1</label>
    </interactant>
    <organismsDiffer>false</organismsDiffer>
    <experiments>4</experiments>
</comment>
<comment type="interaction">
    <interactant intactId="EBI-32973">
        <id>Q12168</id>
    </interactant>
    <interactant intactId="EBI-22980">
        <id>P43603</id>
        <label>LSB3</label>
    </interactant>
    <organismsDiffer>false</organismsDiffer>
    <experiments>7</experiments>
</comment>
<comment type="interaction">
    <interactant intactId="EBI-32973">
        <id>Q12168</id>
    </interactant>
    <interactant intactId="EBI-14500">
        <id>P39743</id>
        <label>RVS167</label>
    </interactant>
    <organismsDiffer>false</organismsDiffer>
    <experiments>9</experiments>
</comment>
<comment type="interaction">
    <interactant intactId="EBI-32973">
        <id>Q12168</id>
    </interactant>
    <interactant intactId="EBI-24460">
        <id>P32793</id>
        <label>YSC84</label>
    </interactant>
    <organismsDiffer>false</organismsDiffer>
    <experiments>7</experiments>
</comment>
<comment type="subcellular location">
    <subcellularLocation>
        <location evidence="4">Cytoplasm</location>
    </subcellularLocation>
</comment>
<comment type="miscellaneous">
    <text evidence="5">Present with 1420 molecules/cell in log phase SD medium.</text>
</comment>
<comment type="similarity">
    <text evidence="2 8">Belongs to the glycosyl hydrolase 81 family.</text>
</comment>
<keyword id="KW-0119">Carbohydrate metabolism</keyword>
<keyword id="KW-0961">Cell wall biogenesis/degradation</keyword>
<keyword id="KW-0963">Cytoplasm</keyword>
<keyword id="KW-0326">Glycosidase</keyword>
<keyword id="KW-0378">Hydrolase</keyword>
<keyword id="KW-0624">Polysaccharide degradation</keyword>
<keyword id="KW-1185">Reference proteome</keyword>